<keyword id="KW-0002">3D-structure</keyword>
<keyword id="KW-0158">Chromosome</keyword>
<keyword id="KW-0539">Nucleus</keyword>
<keyword id="KW-1185">Reference proteome</keyword>
<keyword id="KW-0779">Telomere</keyword>
<gene>
    <name type="primary">RIF2</name>
    <name type="ordered locus">YLR453C</name>
</gene>
<dbReference type="EMBL" id="U22382">
    <property type="protein sequence ID" value="AAB67535.1"/>
    <property type="molecule type" value="Genomic_DNA"/>
</dbReference>
<dbReference type="EMBL" id="AY692860">
    <property type="protein sequence ID" value="AAT92879.1"/>
    <property type="molecule type" value="Genomic_DNA"/>
</dbReference>
<dbReference type="EMBL" id="BK006945">
    <property type="protein sequence ID" value="DAA09753.1"/>
    <property type="molecule type" value="Genomic_DNA"/>
</dbReference>
<dbReference type="PIR" id="S55975">
    <property type="entry name" value="S55975"/>
</dbReference>
<dbReference type="RefSeq" id="NP_013558.3">
    <property type="nucleotide sequence ID" value="NM_001182341.3"/>
</dbReference>
<dbReference type="PDB" id="4BJ1">
    <property type="method" value="X-ray"/>
    <property type="resolution" value="2.94 A"/>
    <property type="chains" value="A=65-380"/>
</dbReference>
<dbReference type="PDB" id="4BJ5">
    <property type="method" value="X-ray"/>
    <property type="resolution" value="3.29 A"/>
    <property type="chains" value="A/B=1-395, D/F=36-48"/>
</dbReference>
<dbReference type="PDB" id="4BJ6">
    <property type="method" value="X-ray"/>
    <property type="resolution" value="3.26 A"/>
    <property type="chains" value="A/B=35-395, D/F=36-48"/>
</dbReference>
<dbReference type="PDBsum" id="4BJ1"/>
<dbReference type="PDBsum" id="4BJ5"/>
<dbReference type="PDBsum" id="4BJ6"/>
<dbReference type="SMR" id="Q06208"/>
<dbReference type="BioGRID" id="31711">
    <property type="interactions" value="119"/>
</dbReference>
<dbReference type="ComplexPortal" id="CPX-2112">
    <property type="entry name" value="Telosome complex"/>
</dbReference>
<dbReference type="DIP" id="DIP-4290N"/>
<dbReference type="FunCoup" id="Q06208">
    <property type="interactions" value="81"/>
</dbReference>
<dbReference type="IntAct" id="Q06208">
    <property type="interactions" value="2"/>
</dbReference>
<dbReference type="STRING" id="4932.YLR453C"/>
<dbReference type="MoonDB" id="Q06208">
    <property type="type" value="Predicted"/>
</dbReference>
<dbReference type="iPTMnet" id="Q06208"/>
<dbReference type="PaxDb" id="4932-YLR453C"/>
<dbReference type="PeptideAtlas" id="Q06208"/>
<dbReference type="EnsemblFungi" id="YLR453C_mRNA">
    <property type="protein sequence ID" value="YLR453C"/>
    <property type="gene ID" value="YLR453C"/>
</dbReference>
<dbReference type="GeneID" id="851174"/>
<dbReference type="KEGG" id="sce:YLR453C"/>
<dbReference type="AGR" id="SGD:S000004445"/>
<dbReference type="SGD" id="S000004445">
    <property type="gene designation" value="RIF2"/>
</dbReference>
<dbReference type="VEuPathDB" id="FungiDB:YLR453C"/>
<dbReference type="HOGENOM" id="CLU_058672_0_0_1"/>
<dbReference type="InParanoid" id="Q06208"/>
<dbReference type="OMA" id="HIVYFKF"/>
<dbReference type="OrthoDB" id="4040458at2759"/>
<dbReference type="BioCyc" id="YEAST:G3O-32506-MONOMER"/>
<dbReference type="BioGRID-ORCS" id="851174">
    <property type="hits" value="0 hits in 10 CRISPR screens"/>
</dbReference>
<dbReference type="EvolutionaryTrace" id="Q06208"/>
<dbReference type="PRO" id="PR:Q06208"/>
<dbReference type="Proteomes" id="UP000002311">
    <property type="component" value="Chromosome XII"/>
</dbReference>
<dbReference type="RNAct" id="Q06208">
    <property type="molecule type" value="protein"/>
</dbReference>
<dbReference type="GO" id="GO:0000781">
    <property type="term" value="C:chromosome, telomeric region"/>
    <property type="evidence" value="ECO:0000314"/>
    <property type="project" value="SGD"/>
</dbReference>
<dbReference type="GO" id="GO:0070187">
    <property type="term" value="C:shelterin complex"/>
    <property type="evidence" value="ECO:0000353"/>
    <property type="project" value="ComplexPortal"/>
</dbReference>
<dbReference type="GO" id="GO:0042162">
    <property type="term" value="F:telomeric DNA binding"/>
    <property type="evidence" value="ECO:0000314"/>
    <property type="project" value="SGD"/>
</dbReference>
<dbReference type="GO" id="GO:0016233">
    <property type="term" value="P:telomere capping"/>
    <property type="evidence" value="ECO:0000315"/>
    <property type="project" value="SGD"/>
</dbReference>
<dbReference type="GO" id="GO:0000723">
    <property type="term" value="P:telomere maintenance"/>
    <property type="evidence" value="ECO:0000303"/>
    <property type="project" value="ComplexPortal"/>
</dbReference>
<dbReference type="GO" id="GO:0007004">
    <property type="term" value="P:telomere maintenance via telomerase"/>
    <property type="evidence" value="ECO:0000315"/>
    <property type="project" value="SGD"/>
</dbReference>
<dbReference type="DisProt" id="DP01606"/>
<dbReference type="Gene3D" id="1.20.120.1650">
    <property type="match status" value="1"/>
</dbReference>
<dbReference type="Gene3D" id="3.40.50.12060">
    <property type="match status" value="1"/>
</dbReference>
<dbReference type="IDEAL" id="IID50224"/>
<dbReference type="InterPro" id="IPR049044">
    <property type="entry name" value="RIF2_ASCE"/>
</dbReference>
<dbReference type="InterPro" id="IPR049045">
    <property type="entry name" value="RIF2_lid"/>
</dbReference>
<dbReference type="Pfam" id="PF21449">
    <property type="entry name" value="RIF2_ASCE"/>
    <property type="match status" value="1"/>
</dbReference>
<dbReference type="Pfam" id="PF21450">
    <property type="entry name" value="RIF2_lid"/>
    <property type="match status" value="1"/>
</dbReference>
<evidence type="ECO:0000250" key="1"/>
<evidence type="ECO:0000269" key="2">
    <source>
    </source>
</evidence>
<evidence type="ECO:0000269" key="3">
    <source>
    </source>
</evidence>
<evidence type="ECO:0000305" key="4"/>
<evidence type="ECO:0007829" key="5">
    <source>
        <dbReference type="PDB" id="4BJ1"/>
    </source>
</evidence>
<evidence type="ECO:0007829" key="6">
    <source>
        <dbReference type="PDB" id="4BJ5"/>
    </source>
</evidence>
<evidence type="ECO:0007829" key="7">
    <source>
        <dbReference type="PDB" id="4BJ6"/>
    </source>
</evidence>
<comment type="function">
    <text evidence="3">Involved in transcriptional silencing and telomere length regulation. Its role in telomere length regulation results from either a block in elongation or promoting degradation of the telomere ends. Loss of RIF1 function results in derepression of an HMR silencer, whose ARS consensus element has been deleted, and in the elongation of telomeres. RAP1 may target the binding of RIF1 to silencers and telomeres.</text>
</comment>
<comment type="subunit">
    <text evidence="3">Interacts with RIF1 and RAP1 C-terminus.</text>
</comment>
<comment type="interaction">
    <interactant intactId="EBI-15199">
        <id>Q06208</id>
    </interactant>
    <interactant intactId="EBI-14821">
        <id>P11938</id>
        <label>RAP1</label>
    </interactant>
    <organismsDiffer>false</organismsDiffer>
    <experiments>5</experiments>
</comment>
<comment type="subcellular location">
    <subcellularLocation>
        <location evidence="1">Nucleus</location>
    </subcellularLocation>
    <subcellularLocation>
        <location evidence="1">Chromosome</location>
        <location evidence="1">Telomere</location>
    </subcellularLocation>
</comment>
<comment type="miscellaneous">
    <text evidence="2">Present with 589 molecules/cell in log phase SD medium.</text>
</comment>
<organism>
    <name type="scientific">Saccharomyces cerevisiae (strain ATCC 204508 / S288c)</name>
    <name type="common">Baker's yeast</name>
    <dbReference type="NCBI Taxonomy" id="559292"/>
    <lineage>
        <taxon>Eukaryota</taxon>
        <taxon>Fungi</taxon>
        <taxon>Dikarya</taxon>
        <taxon>Ascomycota</taxon>
        <taxon>Saccharomycotina</taxon>
        <taxon>Saccharomycetes</taxon>
        <taxon>Saccharomycetales</taxon>
        <taxon>Saccharomycetaceae</taxon>
        <taxon>Saccharomyces</taxon>
    </lineage>
</organism>
<sequence>MEHVDSDFAPIRRSKKVVDSDKIVKAISDDLEQKNFTVLRKLNLVPIKKSVSSPKVCKPSPVKERVDHVFYQKFKSMALQELGTNYLSISYVPSLSKFLSKNLRSMKNCIVFFDKVEHIHQYAGIDRAVSETLSLVDINVVIIEMNDYLMKEGIQSSKSKECIESMGQASYSGQLDFEASEKPSNHTSDLMMMVMRKINNDESIDHIVYFKFEQLDKLSTSTIIEPSKLTEFINVLSVLEKSNNIAFKVLIYSNNVSISSLLSTSLKKKLNTKYTVFEMPILTCAQEQEYLKKMIKFTFDSGSKLLQSYNSLVTCQLNNKESNLAIFFEFLKVFPHPFTYLFNAYTEIIVQSRTFDELLDKIRNRLTIKNYPHSAYNFKKNQRLPLKLTRKVHDR</sequence>
<protein>
    <recommendedName>
        <fullName>Protein RIF2</fullName>
    </recommendedName>
    <alternativeName>
        <fullName>RAP1-interacting factor 2</fullName>
    </alternativeName>
</protein>
<feature type="chain" id="PRO_0000097337" description="Protein RIF2">
    <location>
        <begin position="1"/>
        <end position="395"/>
    </location>
</feature>
<feature type="sequence conflict" description="In Ref. 3; AAT92879." evidence="4" ref="3">
    <original>K</original>
    <variation>R</variation>
    <location>
        <position position="387"/>
    </location>
</feature>
<feature type="helix" evidence="7">
    <location>
        <begin position="37"/>
        <end position="41"/>
    </location>
</feature>
<feature type="helix" evidence="7">
    <location>
        <begin position="64"/>
        <end position="66"/>
    </location>
</feature>
<feature type="helix" evidence="5">
    <location>
        <begin position="71"/>
        <end position="87"/>
    </location>
</feature>
<feature type="helix" evidence="5">
    <location>
        <begin position="93"/>
        <end position="103"/>
    </location>
</feature>
<feature type="strand" evidence="5">
    <location>
        <begin position="104"/>
        <end position="107"/>
    </location>
</feature>
<feature type="strand" evidence="5">
    <location>
        <begin position="109"/>
        <end position="114"/>
    </location>
</feature>
<feature type="helix" evidence="5">
    <location>
        <begin position="119"/>
        <end position="135"/>
    </location>
</feature>
<feature type="strand" evidence="5">
    <location>
        <begin position="137"/>
        <end position="144"/>
    </location>
</feature>
<feature type="helix" evidence="5">
    <location>
        <begin position="146"/>
        <end position="149"/>
    </location>
</feature>
<feature type="helix" evidence="5">
    <location>
        <begin position="189"/>
        <end position="198"/>
    </location>
</feature>
<feature type="turn" evidence="7">
    <location>
        <begin position="200"/>
        <end position="202"/>
    </location>
</feature>
<feature type="strand" evidence="5">
    <location>
        <begin position="204"/>
        <end position="214"/>
    </location>
</feature>
<feature type="strand" evidence="6">
    <location>
        <begin position="217"/>
        <end position="219"/>
    </location>
</feature>
<feature type="helix" evidence="5">
    <location>
        <begin position="226"/>
        <end position="241"/>
    </location>
</feature>
<feature type="strand" evidence="5">
    <location>
        <begin position="245"/>
        <end position="253"/>
    </location>
</feature>
<feature type="helix" evidence="5">
    <location>
        <begin position="260"/>
        <end position="269"/>
    </location>
</feature>
<feature type="strand" evidence="5">
    <location>
        <begin position="274"/>
        <end position="278"/>
    </location>
</feature>
<feature type="helix" evidence="5">
    <location>
        <begin position="284"/>
        <end position="294"/>
    </location>
</feature>
<feature type="helix" evidence="5">
    <location>
        <begin position="304"/>
        <end position="318"/>
    </location>
</feature>
<feature type="helix" evidence="5">
    <location>
        <begin position="323"/>
        <end position="333"/>
    </location>
</feature>
<feature type="helix" evidence="5">
    <location>
        <begin position="337"/>
        <end position="351"/>
    </location>
</feature>
<feature type="helix" evidence="5">
    <location>
        <begin position="355"/>
        <end position="364"/>
    </location>
</feature>
<feature type="turn" evidence="5">
    <location>
        <begin position="368"/>
        <end position="370"/>
    </location>
</feature>
<feature type="helix" evidence="7">
    <location>
        <begin position="373"/>
        <end position="375"/>
    </location>
</feature>
<name>RIF2_YEAST</name>
<proteinExistence type="evidence at protein level"/>
<accession>Q06208</accession>
<accession>D6VZ87</accession>
<accession>E9P8Y1</accession>
<reference key="1">
    <citation type="journal article" date="1997" name="Nature">
        <title>The nucleotide sequence of Saccharomyces cerevisiae chromosome XII.</title>
        <authorList>
            <person name="Johnston M."/>
            <person name="Hillier L.W."/>
            <person name="Riles L."/>
            <person name="Albermann K."/>
            <person name="Andre B."/>
            <person name="Ansorge W."/>
            <person name="Benes V."/>
            <person name="Brueckner M."/>
            <person name="Delius H."/>
            <person name="Dubois E."/>
            <person name="Duesterhoeft A."/>
            <person name="Entian K.-D."/>
            <person name="Floeth M."/>
            <person name="Goffeau A."/>
            <person name="Hebling U."/>
            <person name="Heumann K."/>
            <person name="Heuss-Neitzel D."/>
            <person name="Hilbert H."/>
            <person name="Hilger F."/>
            <person name="Kleine K."/>
            <person name="Koetter P."/>
            <person name="Louis E.J."/>
            <person name="Messenguy F."/>
            <person name="Mewes H.-W."/>
            <person name="Miosga T."/>
            <person name="Moestl D."/>
            <person name="Mueller-Auer S."/>
            <person name="Nentwich U."/>
            <person name="Obermaier B."/>
            <person name="Piravandi E."/>
            <person name="Pohl T.M."/>
            <person name="Portetelle D."/>
            <person name="Purnelle B."/>
            <person name="Rechmann S."/>
            <person name="Rieger M."/>
            <person name="Rinke M."/>
            <person name="Rose M."/>
            <person name="Scharfe M."/>
            <person name="Scherens B."/>
            <person name="Scholler P."/>
            <person name="Schwager C."/>
            <person name="Schwarz S."/>
            <person name="Underwood A.P."/>
            <person name="Urrestarazu L.A."/>
            <person name="Vandenbol M."/>
            <person name="Verhasselt P."/>
            <person name="Vierendeels F."/>
            <person name="Voet M."/>
            <person name="Volckaert G."/>
            <person name="Voss H."/>
            <person name="Wambutt R."/>
            <person name="Wedler E."/>
            <person name="Wedler H."/>
            <person name="Zimmermann F.K."/>
            <person name="Zollner A."/>
            <person name="Hani J."/>
            <person name="Hoheisel J.D."/>
        </authorList>
    </citation>
    <scope>NUCLEOTIDE SEQUENCE [LARGE SCALE GENOMIC DNA]</scope>
    <source>
        <strain>ATCC 204508 / S288c</strain>
    </source>
</reference>
<reference key="2">
    <citation type="journal article" date="2014" name="G3 (Bethesda)">
        <title>The reference genome sequence of Saccharomyces cerevisiae: Then and now.</title>
        <authorList>
            <person name="Engel S.R."/>
            <person name="Dietrich F.S."/>
            <person name="Fisk D.G."/>
            <person name="Binkley G."/>
            <person name="Balakrishnan R."/>
            <person name="Costanzo M.C."/>
            <person name="Dwight S.S."/>
            <person name="Hitz B.C."/>
            <person name="Karra K."/>
            <person name="Nash R.S."/>
            <person name="Weng S."/>
            <person name="Wong E.D."/>
            <person name="Lloyd P."/>
            <person name="Skrzypek M.S."/>
            <person name="Miyasato S.R."/>
            <person name="Simison M."/>
            <person name="Cherry J.M."/>
        </authorList>
    </citation>
    <scope>GENOME REANNOTATION</scope>
    <source>
        <strain>ATCC 204508 / S288c</strain>
    </source>
</reference>
<reference key="3">
    <citation type="journal article" date="2007" name="Genome Res.">
        <title>Approaching a complete repository of sequence-verified protein-encoding clones for Saccharomyces cerevisiae.</title>
        <authorList>
            <person name="Hu Y."/>
            <person name="Rolfs A."/>
            <person name="Bhullar B."/>
            <person name="Murthy T.V.S."/>
            <person name="Zhu C."/>
            <person name="Berger M.F."/>
            <person name="Camargo A.A."/>
            <person name="Kelley F."/>
            <person name="McCarron S."/>
            <person name="Jepson D."/>
            <person name="Richardson A."/>
            <person name="Raphael J."/>
            <person name="Moreira D."/>
            <person name="Taycher E."/>
            <person name="Zuo D."/>
            <person name="Mohr S."/>
            <person name="Kane M.F."/>
            <person name="Williamson J."/>
            <person name="Simpson A.J.G."/>
            <person name="Bulyk M.L."/>
            <person name="Harlow E."/>
            <person name="Marsischky G."/>
            <person name="Kolodner R.D."/>
            <person name="LaBaer J."/>
        </authorList>
    </citation>
    <scope>NUCLEOTIDE SEQUENCE [GENOMIC DNA]</scope>
    <source>
        <strain>ATCC 204508 / S288c</strain>
    </source>
</reference>
<reference key="4">
    <citation type="journal article" date="1997" name="Genes Dev.">
        <title>A novel Rap1p-interacting factor, Rif2p, cooperates with Rif1p to regulate telomere length in Saccharomyces cerevisiae.</title>
        <authorList>
            <person name="Wotton D."/>
            <person name="Shore D."/>
        </authorList>
    </citation>
    <scope>FUNCTION</scope>
    <scope>SUBUNIT</scope>
</reference>
<reference key="5">
    <citation type="journal article" date="2003" name="Nature">
        <title>Global analysis of protein expression in yeast.</title>
        <authorList>
            <person name="Ghaemmaghami S."/>
            <person name="Huh W.-K."/>
            <person name="Bower K."/>
            <person name="Howson R.W."/>
            <person name="Belle A."/>
            <person name="Dephoure N."/>
            <person name="O'Shea E.K."/>
            <person name="Weissman J.S."/>
        </authorList>
    </citation>
    <scope>LEVEL OF PROTEIN EXPRESSION [LARGE SCALE ANALYSIS]</scope>
</reference>